<feature type="signal peptide" evidence="1">
    <location>
        <begin position="1"/>
        <end position="24"/>
    </location>
</feature>
<feature type="propeptide" id="PRO_0000031653">
    <location>
        <begin position="25"/>
        <end position="184"/>
    </location>
</feature>
<feature type="chain" id="PRO_0000031654" description="Pulmonary surfactant-associated protein B">
    <location>
        <begin position="185"/>
        <end position="263"/>
    </location>
</feature>
<feature type="propeptide" id="PRO_0000031655">
    <location>
        <begin position="264"/>
        <end position="370"/>
    </location>
</feature>
<feature type="domain" description="Saposin A-type" evidence="2">
    <location>
        <begin position="26"/>
        <end position="66"/>
    </location>
</feature>
<feature type="domain" description="Saposin B-type 1" evidence="3">
    <location>
        <begin position="66"/>
        <end position="148"/>
    </location>
</feature>
<feature type="domain" description="Saposin B-type 2" evidence="3">
    <location>
        <begin position="188"/>
        <end position="265"/>
    </location>
</feature>
<feature type="domain" description="Saposin B-type 3" evidence="3">
    <location>
        <begin position="284"/>
        <end position="359"/>
    </location>
</feature>
<feature type="glycosylation site" description="N-linked (GlcNAc...) asparagine" evidence="3">
    <location>
        <position position="300"/>
    </location>
</feature>
<feature type="disulfide bond" evidence="3">
    <location>
        <begin position="70"/>
        <end position="144"/>
    </location>
</feature>
<feature type="disulfide bond" evidence="3">
    <location>
        <begin position="73"/>
        <end position="138"/>
    </location>
</feature>
<feature type="disulfide bond" evidence="3">
    <location>
        <begin position="101"/>
        <end position="113"/>
    </location>
</feature>
<feature type="disulfide bond" evidence="3">
    <location>
        <begin position="192"/>
        <end position="261"/>
    </location>
</feature>
<feature type="disulfide bond" evidence="3">
    <location>
        <begin position="195"/>
        <end position="255"/>
    </location>
</feature>
<feature type="disulfide bond" evidence="3">
    <location>
        <begin position="219"/>
        <end position="230"/>
    </location>
</feature>
<feature type="disulfide bond" description="Interchain" evidence="3">
    <location>
        <position position="232"/>
    </location>
</feature>
<feature type="disulfide bond" evidence="3">
    <location>
        <begin position="288"/>
        <end position="355"/>
    </location>
</feature>
<feature type="disulfide bond" evidence="3">
    <location>
        <begin position="291"/>
        <end position="349"/>
    </location>
</feature>
<feature type="disulfide bond" evidence="3">
    <location>
        <begin position="314"/>
        <end position="324"/>
    </location>
</feature>
<feature type="sequence conflict" description="In Ref. 2; AAA67934." evidence="4" ref="2">
    <location>
        <position position="15"/>
    </location>
</feature>
<feature type="sequence conflict" description="In Ref. 3; AAB48076." evidence="4" ref="3">
    <original>Q</original>
    <variation>L</variation>
    <location>
        <position position="129"/>
    </location>
</feature>
<feature type="sequence conflict" description="In Ref. 1; AAA31466." evidence="4" ref="1">
    <original>R</original>
    <variation>P</variation>
    <location>
        <position position="184"/>
    </location>
</feature>
<feature type="sequence conflict" description="In Ref. 2; AAA67934." evidence="4" ref="2">
    <original>C</original>
    <variation>R</variation>
    <location>
        <position position="232"/>
    </location>
</feature>
<feature type="sequence conflict" description="In Ref. 3; AAB48076." evidence="4" ref="3">
    <original>R</original>
    <variation>P</variation>
    <location>
        <position position="289"/>
    </location>
</feature>
<feature type="sequence conflict" description="In Ref. 1; AAA31466." evidence="4" ref="1">
    <original>ELHTPQLLSLLSRGWDARAICQALGAC</original>
    <variation>AAHAPAAEPAVQGLGCPRNLPGPEGRV</variation>
    <location>
        <begin position="329"/>
        <end position="355"/>
    </location>
</feature>
<sequence length="370" mass="40610">MAKSHLPPWLLLLLLPTLCGPGTAVWATSPLACAQGPEFWCQSLEQALQCKALGHCLQEVWGHVGADDLCQECQDIVNILTKMTKEAIFQDTIRKFLEHECDVLPLKLLVPQCHHVLDVYFPLTITYFQSQINAKAICQHLGLCQPGSPEPPLDPLPDKLVLPTLLGALPAKPGPHTQDLSAQRFPIPLPLCWLCRTLLKRIQAMIPKGVLAMAVAQVCHVVPLVVGGICQCLAERYTVILLEVLLGHVLPQLVCGLVLRCSSVDSIGQVPPTLEALPGEWLPQDPECRLCMSVTTQARNISEQTRPQAVYHACLSSQLDKQECEQFVELHTPQLLSLLSRGWDARAICQALGACVATLSPLQCIQSPHF</sequence>
<evidence type="ECO:0000255" key="1"/>
<evidence type="ECO:0000255" key="2">
    <source>
        <dbReference type="PROSITE-ProRule" id="PRU00414"/>
    </source>
</evidence>
<evidence type="ECO:0000255" key="3">
    <source>
        <dbReference type="PROSITE-ProRule" id="PRU00415"/>
    </source>
</evidence>
<evidence type="ECO:0000305" key="4"/>
<name>PSPB_RABIT</name>
<accession>P15285</accession>
<accession>P79333</accession>
<protein>
    <recommendedName>
        <fullName>Pulmonary surfactant-associated protein B</fullName>
        <shortName>SP-B</shortName>
    </recommendedName>
    <alternativeName>
        <fullName>6 kDa protein</fullName>
    </alternativeName>
    <alternativeName>
        <fullName>Pulmonary surfactant-associated proteolipid SPL(Phe)</fullName>
    </alternativeName>
</protein>
<dbReference type="EMBL" id="M24901">
    <property type="protein sequence ID" value="AAA31466.1"/>
    <property type="molecule type" value="mRNA"/>
</dbReference>
<dbReference type="EMBL" id="U17106">
    <property type="protein sequence ID" value="AAA67934.1"/>
    <property type="molecule type" value="mRNA"/>
</dbReference>
<dbReference type="EMBL" id="U40853">
    <property type="protein sequence ID" value="AAB48076.1"/>
    <property type="molecule type" value="Genomic_DNA"/>
</dbReference>
<dbReference type="EMBL" id="S80649">
    <property type="protein sequence ID" value="AAD14335.1"/>
    <property type="molecule type" value="Genomic_DNA"/>
</dbReference>
<dbReference type="PIR" id="A32421">
    <property type="entry name" value="LNRBB"/>
</dbReference>
<dbReference type="PIR" id="I46531">
    <property type="entry name" value="I46531"/>
</dbReference>
<dbReference type="RefSeq" id="NP_001075812.1">
    <property type="nucleotide sequence ID" value="NM_001082343.1"/>
</dbReference>
<dbReference type="RefSeq" id="XP_008250836.1">
    <property type="nucleotide sequence ID" value="XM_008252614.2"/>
</dbReference>
<dbReference type="RefSeq" id="XP_008250841.1">
    <property type="nucleotide sequence ID" value="XM_008252619.2"/>
</dbReference>
<dbReference type="RefSeq" id="XP_008250852.1">
    <property type="nucleotide sequence ID" value="XM_008252630.2"/>
</dbReference>
<dbReference type="RefSeq" id="XP_069923974.1">
    <property type="nucleotide sequence ID" value="XM_070067873.1"/>
</dbReference>
<dbReference type="RefSeq" id="XP_069923979.1">
    <property type="nucleotide sequence ID" value="XM_070067878.1"/>
</dbReference>
<dbReference type="RefSeq" id="XP_069923981.1">
    <property type="nucleotide sequence ID" value="XM_070067880.1"/>
</dbReference>
<dbReference type="SMR" id="P15285"/>
<dbReference type="BioGRID" id="1172216">
    <property type="interactions" value="1"/>
</dbReference>
<dbReference type="FunCoup" id="P15285">
    <property type="interactions" value="8"/>
</dbReference>
<dbReference type="STRING" id="9986.ENSOCUP00000042591"/>
<dbReference type="GlyCosmos" id="P15285">
    <property type="glycosylation" value="1 site, No reported glycans"/>
</dbReference>
<dbReference type="PaxDb" id="9986-ENSOCUP00000025658"/>
<dbReference type="Ensembl" id="ENSOCUT00000021287.1">
    <property type="protein sequence ID" value="ENSOCUP00000025658.1"/>
    <property type="gene ID" value="ENSOCUG00000020733.4"/>
</dbReference>
<dbReference type="GeneID" id="100009194"/>
<dbReference type="KEGG" id="ocu:100009194"/>
<dbReference type="CTD" id="6439"/>
<dbReference type="eggNOG" id="KOG1340">
    <property type="taxonomic scope" value="Eukaryota"/>
</dbReference>
<dbReference type="GeneTree" id="ENSGT00940000161711"/>
<dbReference type="HOGENOM" id="CLU_063244_0_0_1"/>
<dbReference type="InParanoid" id="P15285"/>
<dbReference type="OMA" id="QCKSFME"/>
<dbReference type="OrthoDB" id="8889685at2759"/>
<dbReference type="TreeFam" id="TF316942"/>
<dbReference type="Proteomes" id="UP000001811">
    <property type="component" value="Chromosome 2"/>
</dbReference>
<dbReference type="Bgee" id="ENSOCUG00000020733">
    <property type="expression patterns" value="Expressed in upper lobe of left lung and 11 other cell types or tissues"/>
</dbReference>
<dbReference type="GO" id="GO:0097208">
    <property type="term" value="C:alveolar lamellar body"/>
    <property type="evidence" value="ECO:0007669"/>
    <property type="project" value="TreeGrafter"/>
</dbReference>
<dbReference type="GO" id="GO:0005576">
    <property type="term" value="C:extracellular region"/>
    <property type="evidence" value="ECO:0007669"/>
    <property type="project" value="UniProtKB-SubCell"/>
</dbReference>
<dbReference type="GO" id="GO:0005771">
    <property type="term" value="C:multivesicular body"/>
    <property type="evidence" value="ECO:0007669"/>
    <property type="project" value="TreeGrafter"/>
</dbReference>
<dbReference type="GO" id="GO:0006629">
    <property type="term" value="P:lipid metabolic process"/>
    <property type="evidence" value="ECO:0007669"/>
    <property type="project" value="InterPro"/>
</dbReference>
<dbReference type="GO" id="GO:0007585">
    <property type="term" value="P:respiratory gaseous exchange by respiratory system"/>
    <property type="evidence" value="ECO:0007669"/>
    <property type="project" value="UniProtKB-KW"/>
</dbReference>
<dbReference type="FunFam" id="1.10.225.10:FF:000008">
    <property type="entry name" value="Pulmonary surfactant-associated protein B"/>
    <property type="match status" value="1"/>
</dbReference>
<dbReference type="Gene3D" id="1.10.225.10">
    <property type="entry name" value="Saposin-like"/>
    <property type="match status" value="2"/>
</dbReference>
<dbReference type="InterPro" id="IPR003119">
    <property type="entry name" value="SAP_A"/>
</dbReference>
<dbReference type="InterPro" id="IPR007856">
    <property type="entry name" value="SapB_1"/>
</dbReference>
<dbReference type="InterPro" id="IPR008138">
    <property type="entry name" value="SapB_2"/>
</dbReference>
<dbReference type="InterPro" id="IPR011001">
    <property type="entry name" value="Saposin-like"/>
</dbReference>
<dbReference type="InterPro" id="IPR008139">
    <property type="entry name" value="SaposinB_dom"/>
</dbReference>
<dbReference type="InterPro" id="IPR051428">
    <property type="entry name" value="Sphingo_Act-Surfact_Prot"/>
</dbReference>
<dbReference type="PANTHER" id="PTHR11480:SF33">
    <property type="entry name" value="PULMONARY SURFACTANT-ASSOCIATED PROTEIN B"/>
    <property type="match status" value="1"/>
</dbReference>
<dbReference type="PANTHER" id="PTHR11480">
    <property type="entry name" value="SAPOSIN-RELATED"/>
    <property type="match status" value="1"/>
</dbReference>
<dbReference type="Pfam" id="PF02199">
    <property type="entry name" value="SapA"/>
    <property type="match status" value="1"/>
</dbReference>
<dbReference type="Pfam" id="PF05184">
    <property type="entry name" value="SapB_1"/>
    <property type="match status" value="1"/>
</dbReference>
<dbReference type="Pfam" id="PF03489">
    <property type="entry name" value="SapB_2"/>
    <property type="match status" value="2"/>
</dbReference>
<dbReference type="SMART" id="SM00162">
    <property type="entry name" value="SAPA"/>
    <property type="match status" value="1"/>
</dbReference>
<dbReference type="SMART" id="SM00741">
    <property type="entry name" value="SapB"/>
    <property type="match status" value="3"/>
</dbReference>
<dbReference type="SUPFAM" id="SSF47862">
    <property type="entry name" value="Saposin"/>
    <property type="match status" value="3"/>
</dbReference>
<dbReference type="PROSITE" id="PS51110">
    <property type="entry name" value="SAP_A"/>
    <property type="match status" value="1"/>
</dbReference>
<dbReference type="PROSITE" id="PS50015">
    <property type="entry name" value="SAP_B"/>
    <property type="match status" value="3"/>
</dbReference>
<keyword id="KW-1015">Disulfide bond</keyword>
<keyword id="KW-0305">Gaseous exchange</keyword>
<keyword id="KW-0325">Glycoprotein</keyword>
<keyword id="KW-1185">Reference proteome</keyword>
<keyword id="KW-0677">Repeat</keyword>
<keyword id="KW-0964">Secreted</keyword>
<keyword id="KW-0732">Signal</keyword>
<keyword id="KW-0767">Surface film</keyword>
<gene>
    <name type="primary">SFTPB</name>
    <name type="synonym">SFTP3</name>
</gene>
<organism>
    <name type="scientific">Oryctolagus cuniculus</name>
    <name type="common">Rabbit</name>
    <dbReference type="NCBI Taxonomy" id="9986"/>
    <lineage>
        <taxon>Eukaryota</taxon>
        <taxon>Metazoa</taxon>
        <taxon>Chordata</taxon>
        <taxon>Craniata</taxon>
        <taxon>Vertebrata</taxon>
        <taxon>Euteleostomi</taxon>
        <taxon>Mammalia</taxon>
        <taxon>Eutheria</taxon>
        <taxon>Euarchontoglires</taxon>
        <taxon>Glires</taxon>
        <taxon>Lagomorpha</taxon>
        <taxon>Leporidae</taxon>
        <taxon>Oryctolagus</taxon>
    </lineage>
</organism>
<reference key="1">
    <citation type="journal article" date="1989" name="Biochem. Biophys. Res. Commun.">
        <title>Isolation and characterization of the cDNA for pulmonary surfactant-associated protein-B (SP-B) in the rabbit.</title>
        <authorList>
            <person name="Xu J."/>
            <person name="Richardson C."/>
            <person name="Ford C."/>
            <person name="Spencer T."/>
            <person name="Li-Juan Y."/>
            <person name="Mackie G."/>
            <person name="Hammond G."/>
            <person name="Possmayer F."/>
        </authorList>
    </citation>
    <scope>NUCLEOTIDE SEQUENCE [MRNA]</scope>
    <source>
        <tissue>Lung</tissue>
    </source>
</reference>
<reference key="2">
    <citation type="journal article" date="1995" name="Am. J. Physiol.">
        <title>Transcription and mRNA stability regulate developmental and hormonal expression of rabbit surfactant protein B gene.</title>
        <authorList>
            <person name="Margana R.K."/>
            <person name="Boggaram V."/>
        </authorList>
    </citation>
    <scope>NUCLEOTIDE SEQUENCE [MRNA]</scope>
    <source>
        <strain>New Zealand white</strain>
    </source>
</reference>
<reference key="3">
    <citation type="journal article" date="1996" name="Am. J. Physiol.">
        <title>Rabbit surfactant protein B gene: structure and functional characterization of the promoter.</title>
        <authorList>
            <person name="Margana R.K."/>
            <person name="Boggaram V."/>
        </authorList>
    </citation>
    <scope>NUCLEOTIDE SEQUENCE [GENOMIC DNA]</scope>
    <source>
        <tissue>Liver</tissue>
    </source>
</reference>
<reference key="4">
    <citation type="journal article" date="1995" name="Gene">
        <title>The upstream region of the SP-B gene: intrinsic promoter activity and glucocorticoid responsiveness related to a new DNA-binding protein.</title>
        <authorList>
            <person name="Luzi P."/>
            <person name="Anceschi M."/>
            <person name="Strayer D.S."/>
        </authorList>
    </citation>
    <scope>NUCLEOTIDE SEQUENCE [GENOMIC DNA] OF 1-34</scope>
</reference>
<proteinExistence type="evidence at transcript level"/>
<comment type="function">
    <text>Pulmonary surfactant-associated proteins promote alveolar stability by lowering the surface tension at the air-liquid interface in the peripheral air spaces. SP-B increases the collapse pressure of palmitic acid to nearly 70 millinewtons per meter.</text>
</comment>
<comment type="subunit">
    <text>Homodimer; disulfide-linked.</text>
</comment>
<comment type="subcellular location">
    <subcellularLocation>
        <location>Secreted</location>
        <location>Extracellular space</location>
        <location>Surface film</location>
    </subcellularLocation>
</comment>
<comment type="miscellaneous">
    <text>Pulmonary surfactant consists of 90% lipid and 10% protein. There are 4 surfactant-associated proteins: 2 collagenous, carbohydrate-binding glycoproteins (SP-A and SP-D) and 2 small hydrophobic proteins (SP-B and SP-C).</text>
</comment>